<evidence type="ECO:0000250" key="1">
    <source>
        <dbReference type="UniProtKB" id="Q66GT5"/>
    </source>
</evidence>
<evidence type="ECO:0000250" key="2">
    <source>
        <dbReference type="UniProtKB" id="Q8WUK0"/>
    </source>
</evidence>
<evidence type="ECO:0000255" key="3"/>
<evidence type="ECO:0000255" key="4">
    <source>
        <dbReference type="PROSITE-ProRule" id="PRU00160"/>
    </source>
</evidence>
<evidence type="ECO:0000255" key="5">
    <source>
        <dbReference type="PROSITE-ProRule" id="PRU10044"/>
    </source>
</evidence>
<evidence type="ECO:0000269" key="6">
    <source>
    </source>
</evidence>
<evidence type="ECO:0000305" key="7"/>
<evidence type="ECO:0000305" key="8">
    <source>
    </source>
</evidence>
<evidence type="ECO:0000312" key="9">
    <source>
        <dbReference type="RGD" id="1589783"/>
    </source>
</evidence>
<keyword id="KW-0378">Hydrolase</keyword>
<keyword id="KW-0444">Lipid biosynthesis</keyword>
<keyword id="KW-0443">Lipid metabolism</keyword>
<keyword id="KW-0472">Membrane</keyword>
<keyword id="KW-0496">Mitochondrion</keyword>
<keyword id="KW-0999">Mitochondrion inner membrane</keyword>
<keyword id="KW-0594">Phospholipid biosynthesis</keyword>
<keyword id="KW-1208">Phospholipid metabolism</keyword>
<keyword id="KW-0904">Protein phosphatase</keyword>
<keyword id="KW-1185">Reference proteome</keyword>
<keyword id="KW-0809">Transit peptide</keyword>
<name>PTPM1_RAT</name>
<gene>
    <name evidence="9" type="primary">Ptpmt1</name>
</gene>
<sequence length="193" mass="21886">MAASAWLEAGLARVLFYPTLLYTVFRGRVGGPAHRDWYHRIDHTVLLGALPLRSMTRRLVLDENVRGVITMNEEYETRFLCNTSKEWKNVGVEQLRLSTVDMTGVPTLANLHRGVQFALKYQSLGQCVYVHCKAGRSRSATMVAAYLIQVHNWSPEEAIEAIAKIRSHISIRPSQLEILKEFHKEIAARAAKN</sequence>
<protein>
    <recommendedName>
        <fullName evidence="7">Phosphatidylglycerophosphatase and protein-tyrosine phosphatase 1</fullName>
        <ecNumber evidence="1">3.1.3.27</ecNumber>
    </recommendedName>
    <alternativeName>
        <fullName>Protein-tyrosine phosphatase mitochondrial 1</fullName>
        <ecNumber evidence="8">3.1.3.16</ecNumber>
        <ecNumber evidence="5">3.1.3.48</ecNumber>
    </alternativeName>
</protein>
<organism>
    <name type="scientific">Rattus norvegicus</name>
    <name type="common">Rat</name>
    <dbReference type="NCBI Taxonomy" id="10116"/>
    <lineage>
        <taxon>Eukaryota</taxon>
        <taxon>Metazoa</taxon>
        <taxon>Chordata</taxon>
        <taxon>Craniata</taxon>
        <taxon>Vertebrata</taxon>
        <taxon>Euteleostomi</taxon>
        <taxon>Mammalia</taxon>
        <taxon>Eutheria</taxon>
        <taxon>Euarchontoglires</taxon>
        <taxon>Glires</taxon>
        <taxon>Rodentia</taxon>
        <taxon>Myomorpha</taxon>
        <taxon>Muroidea</taxon>
        <taxon>Muridae</taxon>
        <taxon>Murinae</taxon>
        <taxon>Rattus</taxon>
    </lineage>
</organism>
<accession>P0C089</accession>
<feature type="transit peptide" description="Mitochondrion" evidence="3">
    <location>
        <begin position="1"/>
        <end position="31"/>
    </location>
</feature>
<feature type="chain" id="PRO_0000025425" description="Phosphatidylglycerophosphatase and protein-tyrosine phosphatase 1">
    <location>
        <begin position="32"/>
        <end position="193"/>
    </location>
</feature>
<feature type="domain" description="Tyrosine-protein phosphatase" evidence="4">
    <location>
        <begin position="37"/>
        <end position="188"/>
    </location>
</feature>
<feature type="active site" description="Phosphocysteine intermediate" evidence="4">
    <location>
        <position position="132"/>
    </location>
</feature>
<feature type="modified residue" description="N6-succinyllysine" evidence="1">
    <location>
        <position position="85"/>
    </location>
</feature>
<comment type="function">
    <text evidence="1 2 6">Lipid phosphatase which dephosphorylates phosphatidylglycerophosphate (PGP) to phosphatidylglycerol (PG) (By similarity). PGP is an essential intermediate in the biosynthetic pathway of cardiolipin, a mitochondrial-specific phospholipid regulating the membrane integrity and activities of the organelle (By similarity). Has also been shown to display phosphatase activity toward phosphoprotein substrates, specifically mediates dephosphorylation of mitochondrial proteins, thereby playing an essential role in ATP production (PubMed:16039589). Has probably a preference for proteins phosphorylated on Ser and/or Thr residues compared to proteins phosphorylated on Tyr residues (PubMed:16039589). Probably involved in regulation of insulin secretion in pancreatic beta cells (PubMed:16039589). May prevent intrinsic apoptosis, probably by regulating mitochondrial membrane integrity (By similarity).</text>
</comment>
<comment type="catalytic activity">
    <reaction evidence="5">
        <text>O-phospho-L-tyrosyl-[protein] + H2O = L-tyrosyl-[protein] + phosphate</text>
        <dbReference type="Rhea" id="RHEA:10684"/>
        <dbReference type="Rhea" id="RHEA-COMP:10136"/>
        <dbReference type="Rhea" id="RHEA-COMP:20101"/>
        <dbReference type="ChEBI" id="CHEBI:15377"/>
        <dbReference type="ChEBI" id="CHEBI:43474"/>
        <dbReference type="ChEBI" id="CHEBI:46858"/>
        <dbReference type="ChEBI" id="CHEBI:61978"/>
        <dbReference type="EC" id="3.1.3.48"/>
    </reaction>
    <physiologicalReaction direction="left-to-right" evidence="7">
        <dbReference type="Rhea" id="RHEA:10685"/>
    </physiologicalReaction>
</comment>
<comment type="catalytic activity">
    <reaction evidence="8">
        <text>O-phospho-L-seryl-[protein] + H2O = L-seryl-[protein] + phosphate</text>
        <dbReference type="Rhea" id="RHEA:20629"/>
        <dbReference type="Rhea" id="RHEA-COMP:9863"/>
        <dbReference type="Rhea" id="RHEA-COMP:11604"/>
        <dbReference type="ChEBI" id="CHEBI:15377"/>
        <dbReference type="ChEBI" id="CHEBI:29999"/>
        <dbReference type="ChEBI" id="CHEBI:43474"/>
        <dbReference type="ChEBI" id="CHEBI:83421"/>
        <dbReference type="EC" id="3.1.3.16"/>
    </reaction>
    <physiologicalReaction direction="left-to-right" evidence="7">
        <dbReference type="Rhea" id="RHEA:20630"/>
    </physiologicalReaction>
</comment>
<comment type="catalytic activity">
    <reaction evidence="8">
        <text>O-phospho-L-threonyl-[protein] + H2O = L-threonyl-[protein] + phosphate</text>
        <dbReference type="Rhea" id="RHEA:47004"/>
        <dbReference type="Rhea" id="RHEA-COMP:11060"/>
        <dbReference type="Rhea" id="RHEA-COMP:11605"/>
        <dbReference type="ChEBI" id="CHEBI:15377"/>
        <dbReference type="ChEBI" id="CHEBI:30013"/>
        <dbReference type="ChEBI" id="CHEBI:43474"/>
        <dbReference type="ChEBI" id="CHEBI:61977"/>
        <dbReference type="EC" id="3.1.3.16"/>
    </reaction>
    <physiologicalReaction direction="left-to-right" evidence="7">
        <dbReference type="Rhea" id="RHEA:47005"/>
    </physiologicalReaction>
</comment>
<comment type="catalytic activity">
    <reaction evidence="1">
        <text>a 1,2-diacyl-sn-glycero-3-phospho-(1'-sn-glycero-3'-phosphate) + H2O = a 1,2-diacyl-sn-glycero-3-phospho-(1'-sn-glycerol) + phosphate</text>
        <dbReference type="Rhea" id="RHEA:33751"/>
        <dbReference type="ChEBI" id="CHEBI:15377"/>
        <dbReference type="ChEBI" id="CHEBI:43474"/>
        <dbReference type="ChEBI" id="CHEBI:60110"/>
        <dbReference type="ChEBI" id="CHEBI:64716"/>
        <dbReference type="EC" id="3.1.3.27"/>
    </reaction>
    <physiologicalReaction direction="left-to-right" evidence="7">
        <dbReference type="Rhea" id="RHEA:33752"/>
    </physiologicalReaction>
</comment>
<comment type="catalytic activity">
    <reaction evidence="1">
        <text>1,2-di-(9Z-octadecenoyl)-sn-glycero-3-phospho-(1'-sn-glycerol-3'-phosphate) + H2O = 1,2-di-(9Z-octadecenoyl)-sn-glycero-3-phospho-(1'-sn-glycerol) + phosphate</text>
        <dbReference type="Rhea" id="RHEA:42304"/>
        <dbReference type="ChEBI" id="CHEBI:15377"/>
        <dbReference type="ChEBI" id="CHEBI:43474"/>
        <dbReference type="ChEBI" id="CHEBI:75163"/>
        <dbReference type="ChEBI" id="CHEBI:78907"/>
    </reaction>
    <physiologicalReaction direction="left-to-right" evidence="1">
        <dbReference type="Rhea" id="RHEA:42305"/>
    </physiologicalReaction>
</comment>
<comment type="catalytic activity">
    <reaction evidence="1">
        <text>1,2-dioctanoyl-sn-glycero-3-phospho-(1D-myo-inositol-5-phosphate) + H2O = 1,2-dioctanoyl-sn-glycero-3-phospho-(1D-myo-inositol) + phosphate</text>
        <dbReference type="Rhea" id="RHEA:42308"/>
        <dbReference type="ChEBI" id="CHEBI:15377"/>
        <dbReference type="ChEBI" id="CHEBI:43474"/>
        <dbReference type="ChEBI" id="CHEBI:65221"/>
        <dbReference type="ChEBI" id="CHEBI:78911"/>
    </reaction>
    <physiologicalReaction direction="left-to-right" evidence="1">
        <dbReference type="Rhea" id="RHEA:42309"/>
    </physiologicalReaction>
</comment>
<comment type="catalytic activity">
    <reaction evidence="1">
        <text>a 1-acyl-2-hexanoyl-sn-glycero-3-phospho-(1D-myo-inositol-5-phosphate) + H2O = a 1-acyl-2-hexanoyl-sn-glycero-3-phospho-(1D-myo-inositol) + phosphate</text>
        <dbReference type="Rhea" id="RHEA:42320"/>
        <dbReference type="ChEBI" id="CHEBI:15377"/>
        <dbReference type="ChEBI" id="CHEBI:43474"/>
        <dbReference type="ChEBI" id="CHEBI:78930"/>
        <dbReference type="ChEBI" id="CHEBI:78931"/>
    </reaction>
    <physiologicalReaction direction="left-to-right" evidence="1">
        <dbReference type="Rhea" id="RHEA:42321"/>
    </physiologicalReaction>
</comment>
<comment type="catalytic activity">
    <reaction evidence="1">
        <text>1,2-dibutyryl-sn-glycero-3-phospho-(1D-myo-inositol-5-phosphate) + H2O = 1,2-dibutyryl-sn-glycero-3-phospho-(1D-myo-inositol) + phosphate</text>
        <dbReference type="Rhea" id="RHEA:42584"/>
        <dbReference type="ChEBI" id="CHEBI:15377"/>
        <dbReference type="ChEBI" id="CHEBI:43474"/>
        <dbReference type="ChEBI" id="CHEBI:82605"/>
        <dbReference type="ChEBI" id="CHEBI:82606"/>
    </reaction>
    <physiologicalReaction direction="left-to-right" evidence="1">
        <dbReference type="Rhea" id="RHEA:42585"/>
    </physiologicalReaction>
</comment>
<comment type="pathway">
    <text evidence="1">Phospholipid metabolism; phosphatidylglycerol biosynthesis; phosphatidylglycerol from CDP-diacylglycerol: step 2/2.</text>
</comment>
<comment type="subunit">
    <text evidence="2">Interacts with STYXL1; the interaction inhibits PTPMT1 catalytic activity.</text>
</comment>
<comment type="subcellular location">
    <subcellularLocation>
        <location evidence="6">Mitochondrion inner membrane</location>
        <topology evidence="6">Peripheral membrane protein</topology>
        <orientation evidence="6">Matrix side</orientation>
    </subcellularLocation>
</comment>
<comment type="tissue specificity">
    <text evidence="6">Expressed in liver and in pancreatic beta cells.</text>
</comment>
<comment type="miscellaneous">
    <text evidence="6">Its absence in pancreatic insulinoma cell line INS-1 832/13 alters the mitochondrial phosphoprotein profile and markedly enhances both ATP production and insulin secretion, suggesting that it may serve as a drug target for the treatment of type II diabetes.</text>
</comment>
<comment type="similarity">
    <text evidence="7">Belongs to the protein-tyrosine phosphatase family. Non-receptor class dual specificity subfamily.</text>
</comment>
<comment type="caution">
    <text evidence="8">Does not have phosphatidylinositol 5-phosphatase activity.</text>
</comment>
<dbReference type="EC" id="3.1.3.27" evidence="1"/>
<dbReference type="EC" id="3.1.3.16" evidence="8"/>
<dbReference type="EC" id="3.1.3.48" evidence="5"/>
<dbReference type="EMBL" id="AABR03026072">
    <property type="status" value="NOT_ANNOTATED_CDS"/>
    <property type="molecule type" value="mRNA"/>
</dbReference>
<dbReference type="EMBL" id="AABR03030907">
    <property type="status" value="NOT_ANNOTATED_CDS"/>
    <property type="molecule type" value="mRNA"/>
</dbReference>
<dbReference type="EMBL" id="AABR03026441">
    <property type="status" value="NOT_ANNOTATED_CDS"/>
    <property type="molecule type" value="mRNA"/>
</dbReference>
<dbReference type="SMR" id="P0C089"/>
<dbReference type="FunCoup" id="P0C089">
    <property type="interactions" value="278"/>
</dbReference>
<dbReference type="STRING" id="10116.ENSRNOP00000013584"/>
<dbReference type="iPTMnet" id="P0C089"/>
<dbReference type="PhosphoSitePlus" id="P0C089"/>
<dbReference type="jPOST" id="P0C089"/>
<dbReference type="PaxDb" id="10116-ENSRNOP00000013584"/>
<dbReference type="PeptideAtlas" id="P0C089"/>
<dbReference type="UCSC" id="RGD:1589783">
    <property type="organism name" value="rat"/>
</dbReference>
<dbReference type="AGR" id="RGD:1589783"/>
<dbReference type="RGD" id="1589783">
    <property type="gene designation" value="Ptpmt1"/>
</dbReference>
<dbReference type="eggNOG" id="KOG1719">
    <property type="taxonomic scope" value="Eukaryota"/>
</dbReference>
<dbReference type="InParanoid" id="P0C089"/>
<dbReference type="PhylomeDB" id="P0C089"/>
<dbReference type="UniPathway" id="UPA00084">
    <property type="reaction ID" value="UER00504"/>
</dbReference>
<dbReference type="PRO" id="PR:P0C089"/>
<dbReference type="Proteomes" id="UP000002494">
    <property type="component" value="Unplaced"/>
</dbReference>
<dbReference type="GO" id="GO:0005743">
    <property type="term" value="C:mitochondrial inner membrane"/>
    <property type="evidence" value="ECO:0000314"/>
    <property type="project" value="RGD"/>
</dbReference>
<dbReference type="GO" id="GO:0005739">
    <property type="term" value="C:mitochondrion"/>
    <property type="evidence" value="ECO:0000266"/>
    <property type="project" value="RGD"/>
</dbReference>
<dbReference type="GO" id="GO:0008962">
    <property type="term" value="F:phosphatidylglycerophosphatase activity"/>
    <property type="evidence" value="ECO:0000250"/>
    <property type="project" value="UniProtKB"/>
</dbReference>
<dbReference type="GO" id="GO:0004439">
    <property type="term" value="F:phosphatidylinositol-4,5-bisphosphate 5-phosphatase activity"/>
    <property type="evidence" value="ECO:0000266"/>
    <property type="project" value="RGD"/>
</dbReference>
<dbReference type="GO" id="GO:0004722">
    <property type="term" value="F:protein serine/threonine phosphatase activity"/>
    <property type="evidence" value="ECO:0007669"/>
    <property type="project" value="UniProtKB-EC"/>
</dbReference>
<dbReference type="GO" id="GO:0004725">
    <property type="term" value="F:protein tyrosine phosphatase activity"/>
    <property type="evidence" value="ECO:0007669"/>
    <property type="project" value="UniProtKB-EC"/>
</dbReference>
<dbReference type="GO" id="GO:0032049">
    <property type="term" value="P:cardiolipin biosynthetic process"/>
    <property type="evidence" value="ECO:0000250"/>
    <property type="project" value="UniProtKB"/>
</dbReference>
<dbReference type="GO" id="GO:0061179">
    <property type="term" value="P:negative regulation of insulin secretion involved in cellular response to glucose stimulus"/>
    <property type="evidence" value="ECO:0000315"/>
    <property type="project" value="RGD"/>
</dbReference>
<dbReference type="GO" id="GO:2001242">
    <property type="term" value="P:regulation of intrinsic apoptotic signaling pathway"/>
    <property type="evidence" value="ECO:0000266"/>
    <property type="project" value="RGD"/>
</dbReference>
<dbReference type="CDD" id="cd14524">
    <property type="entry name" value="PTPMT1"/>
    <property type="match status" value="1"/>
</dbReference>
<dbReference type="FunFam" id="3.90.190.10:FF:000060">
    <property type="entry name" value="Phosphatidylglycerophosphatase and protein-tyrosine phosphatase 1"/>
    <property type="match status" value="1"/>
</dbReference>
<dbReference type="Gene3D" id="3.90.190.10">
    <property type="entry name" value="Protein tyrosine phosphatase superfamily"/>
    <property type="match status" value="1"/>
</dbReference>
<dbReference type="InterPro" id="IPR000340">
    <property type="entry name" value="Dual-sp_phosphatase_cat-dom"/>
</dbReference>
<dbReference type="InterPro" id="IPR029021">
    <property type="entry name" value="Prot-tyrosine_phosphatase-like"/>
</dbReference>
<dbReference type="InterPro" id="IPR042165">
    <property type="entry name" value="PTPMT1"/>
</dbReference>
<dbReference type="InterPro" id="IPR044596">
    <property type="entry name" value="PTPMT1-like"/>
</dbReference>
<dbReference type="InterPro" id="IPR016130">
    <property type="entry name" value="Tyr_Pase_AS"/>
</dbReference>
<dbReference type="InterPro" id="IPR000387">
    <property type="entry name" value="Tyr_Pase_dom"/>
</dbReference>
<dbReference type="InterPro" id="IPR020422">
    <property type="entry name" value="TYR_PHOSPHATASE_DUAL_dom"/>
</dbReference>
<dbReference type="PANTHER" id="PTHR46712">
    <property type="entry name" value="PHOSPHATIDYLGLYCEROPHOSPHATASE AND PROTEIN-TYROSINE PHOSPHATASE 1"/>
    <property type="match status" value="1"/>
</dbReference>
<dbReference type="PANTHER" id="PTHR46712:SF1">
    <property type="entry name" value="PHOSPHATIDYLGLYCEROPHOSPHATASE AND PROTEIN-TYROSINE PHOSPHATASE 1"/>
    <property type="match status" value="1"/>
</dbReference>
<dbReference type="Pfam" id="PF00782">
    <property type="entry name" value="DSPc"/>
    <property type="match status" value="1"/>
</dbReference>
<dbReference type="SMART" id="SM00195">
    <property type="entry name" value="DSPc"/>
    <property type="match status" value="1"/>
</dbReference>
<dbReference type="SUPFAM" id="SSF52799">
    <property type="entry name" value="(Phosphotyrosine protein) phosphatases II"/>
    <property type="match status" value="1"/>
</dbReference>
<dbReference type="PROSITE" id="PS00383">
    <property type="entry name" value="TYR_PHOSPHATASE_1"/>
    <property type="match status" value="1"/>
</dbReference>
<dbReference type="PROSITE" id="PS50056">
    <property type="entry name" value="TYR_PHOSPHATASE_2"/>
    <property type="match status" value="1"/>
</dbReference>
<dbReference type="PROSITE" id="PS50054">
    <property type="entry name" value="TYR_PHOSPHATASE_DUAL"/>
    <property type="match status" value="1"/>
</dbReference>
<reference key="1">
    <citation type="journal article" date="2004" name="Nature">
        <title>Genome sequence of the Brown Norway rat yields insights into mammalian evolution.</title>
        <authorList>
            <person name="Gibbs R.A."/>
            <person name="Weinstock G.M."/>
            <person name="Metzker M.L."/>
            <person name="Muzny D.M."/>
            <person name="Sodergren E.J."/>
            <person name="Scherer S."/>
            <person name="Scott G."/>
            <person name="Steffen D."/>
            <person name="Worley K.C."/>
            <person name="Burch P.E."/>
            <person name="Okwuonu G."/>
            <person name="Hines S."/>
            <person name="Lewis L."/>
            <person name="Deramo C."/>
            <person name="Delgado O."/>
            <person name="Dugan-Rocha S."/>
            <person name="Miner G."/>
            <person name="Morgan M."/>
            <person name="Hawes A."/>
            <person name="Gill R."/>
            <person name="Holt R.A."/>
            <person name="Adams M.D."/>
            <person name="Amanatides P.G."/>
            <person name="Baden-Tillson H."/>
            <person name="Barnstead M."/>
            <person name="Chin S."/>
            <person name="Evans C.A."/>
            <person name="Ferriera S."/>
            <person name="Fosler C."/>
            <person name="Glodek A."/>
            <person name="Gu Z."/>
            <person name="Jennings D."/>
            <person name="Kraft C.L."/>
            <person name="Nguyen T."/>
            <person name="Pfannkoch C.M."/>
            <person name="Sitter C."/>
            <person name="Sutton G.G."/>
            <person name="Venter J.C."/>
            <person name="Woodage T."/>
            <person name="Smith D."/>
            <person name="Lee H.-M."/>
            <person name="Gustafson E."/>
            <person name="Cahill P."/>
            <person name="Kana A."/>
            <person name="Doucette-Stamm L."/>
            <person name="Weinstock K."/>
            <person name="Fechtel K."/>
            <person name="Weiss R.B."/>
            <person name="Dunn D.M."/>
            <person name="Green E.D."/>
            <person name="Blakesley R.W."/>
            <person name="Bouffard G.G."/>
            <person name="De Jong P.J."/>
            <person name="Osoegawa K."/>
            <person name="Zhu B."/>
            <person name="Marra M."/>
            <person name="Schein J."/>
            <person name="Bosdet I."/>
            <person name="Fjell C."/>
            <person name="Jones S."/>
            <person name="Krzywinski M."/>
            <person name="Mathewson C."/>
            <person name="Siddiqui A."/>
            <person name="Wye N."/>
            <person name="McPherson J."/>
            <person name="Zhao S."/>
            <person name="Fraser C.M."/>
            <person name="Shetty J."/>
            <person name="Shatsman S."/>
            <person name="Geer K."/>
            <person name="Chen Y."/>
            <person name="Abramzon S."/>
            <person name="Nierman W.C."/>
            <person name="Havlak P.H."/>
            <person name="Chen R."/>
            <person name="Durbin K.J."/>
            <person name="Egan A."/>
            <person name="Ren Y."/>
            <person name="Song X.-Z."/>
            <person name="Li B."/>
            <person name="Liu Y."/>
            <person name="Qin X."/>
            <person name="Cawley S."/>
            <person name="Cooney A.J."/>
            <person name="D'Souza L.M."/>
            <person name="Martin K."/>
            <person name="Wu J.Q."/>
            <person name="Gonzalez-Garay M.L."/>
            <person name="Jackson A.R."/>
            <person name="Kalafus K.J."/>
            <person name="McLeod M.P."/>
            <person name="Milosavljevic A."/>
            <person name="Virk D."/>
            <person name="Volkov A."/>
            <person name="Wheeler D.A."/>
            <person name="Zhang Z."/>
            <person name="Bailey J.A."/>
            <person name="Eichler E.E."/>
            <person name="Tuzun E."/>
            <person name="Birney E."/>
            <person name="Mongin E."/>
            <person name="Ureta-Vidal A."/>
            <person name="Woodwark C."/>
            <person name="Zdobnov E."/>
            <person name="Bork P."/>
            <person name="Suyama M."/>
            <person name="Torrents D."/>
            <person name="Alexandersson M."/>
            <person name="Trask B.J."/>
            <person name="Young J.M."/>
            <person name="Huang H."/>
            <person name="Wang H."/>
            <person name="Xing H."/>
            <person name="Daniels S."/>
            <person name="Gietzen D."/>
            <person name="Schmidt J."/>
            <person name="Stevens K."/>
            <person name="Vitt U."/>
            <person name="Wingrove J."/>
            <person name="Camara F."/>
            <person name="Mar Alba M."/>
            <person name="Abril J.F."/>
            <person name="Guigo R."/>
            <person name="Smit A."/>
            <person name="Dubchak I."/>
            <person name="Rubin E.M."/>
            <person name="Couronne O."/>
            <person name="Poliakov A."/>
            <person name="Huebner N."/>
            <person name="Ganten D."/>
            <person name="Goesele C."/>
            <person name="Hummel O."/>
            <person name="Kreitler T."/>
            <person name="Lee Y.-A."/>
            <person name="Monti J."/>
            <person name="Schulz H."/>
            <person name="Zimdahl H."/>
            <person name="Himmelbauer H."/>
            <person name="Lehrach H."/>
            <person name="Jacob H.J."/>
            <person name="Bromberg S."/>
            <person name="Gullings-Handley J."/>
            <person name="Jensen-Seaman M.I."/>
            <person name="Kwitek A.E."/>
            <person name="Lazar J."/>
            <person name="Pasko D."/>
            <person name="Tonellato P.J."/>
            <person name="Twigger S."/>
            <person name="Ponting C.P."/>
            <person name="Duarte J.M."/>
            <person name="Rice S."/>
            <person name="Goodstadt L."/>
            <person name="Beatson S.A."/>
            <person name="Emes R.D."/>
            <person name="Winter E.E."/>
            <person name="Webber C."/>
            <person name="Brandt P."/>
            <person name="Nyakatura G."/>
            <person name="Adetobi M."/>
            <person name="Chiaromonte F."/>
            <person name="Elnitski L."/>
            <person name="Eswara P."/>
            <person name="Hardison R.C."/>
            <person name="Hou M."/>
            <person name="Kolbe D."/>
            <person name="Makova K."/>
            <person name="Miller W."/>
            <person name="Nekrutenko A."/>
            <person name="Riemer C."/>
            <person name="Schwartz S."/>
            <person name="Taylor J."/>
            <person name="Yang S."/>
            <person name="Zhang Y."/>
            <person name="Lindpaintner K."/>
            <person name="Andrews T.D."/>
            <person name="Caccamo M."/>
            <person name="Clamp M."/>
            <person name="Clarke L."/>
            <person name="Curwen V."/>
            <person name="Durbin R.M."/>
            <person name="Eyras E."/>
            <person name="Searle S.M."/>
            <person name="Cooper G.M."/>
            <person name="Batzoglou S."/>
            <person name="Brudno M."/>
            <person name="Sidow A."/>
            <person name="Stone E.A."/>
            <person name="Payseur B.A."/>
            <person name="Bourque G."/>
            <person name="Lopez-Otin C."/>
            <person name="Puente X.S."/>
            <person name="Chakrabarti K."/>
            <person name="Chatterji S."/>
            <person name="Dewey C."/>
            <person name="Pachter L."/>
            <person name="Bray N."/>
            <person name="Yap V.B."/>
            <person name="Caspi A."/>
            <person name="Tesler G."/>
            <person name="Pevzner P.A."/>
            <person name="Haussler D."/>
            <person name="Roskin K.M."/>
            <person name="Baertsch R."/>
            <person name="Clawson H."/>
            <person name="Furey T.S."/>
            <person name="Hinrichs A.S."/>
            <person name="Karolchik D."/>
            <person name="Kent W.J."/>
            <person name="Rosenbloom K.R."/>
            <person name="Trumbower H."/>
            <person name="Weirauch M."/>
            <person name="Cooper D.N."/>
            <person name="Stenson P.D."/>
            <person name="Ma B."/>
            <person name="Brent M."/>
            <person name="Arumugam M."/>
            <person name="Shteynberg D."/>
            <person name="Copley R.R."/>
            <person name="Taylor M.S."/>
            <person name="Riethman H."/>
            <person name="Mudunuri U."/>
            <person name="Peterson J."/>
            <person name="Guyer M."/>
            <person name="Felsenfeld A."/>
            <person name="Old S."/>
            <person name="Mockrin S."/>
            <person name="Collins F.S."/>
        </authorList>
    </citation>
    <scope>NUCLEOTIDE SEQUENCE [LARGE SCALE GENOMIC DNA]</scope>
    <source>
        <strain>Brown Norway</strain>
    </source>
</reference>
<reference key="2">
    <citation type="journal article" date="2005" name="Mol. Cell">
        <title>Involvement of a mitochondrial phosphatase in the regulation of ATP production and insulin secretion in pancreatic beta cells.</title>
        <authorList>
            <person name="Pagliarini D.J."/>
            <person name="Wiley S.E."/>
            <person name="Kimple M.E."/>
            <person name="Dixon J.R."/>
            <person name="Kelly P."/>
            <person name="Worby C.A."/>
            <person name="Casey P.J."/>
            <person name="Dixon J.E."/>
        </authorList>
    </citation>
    <scope>FUNCTION</scope>
    <scope>CATALYTIC ACTIVITY</scope>
    <scope>SUBCELLULAR LOCATION</scope>
    <scope>TISSUE SPECIFICITY</scope>
</reference>
<proteinExistence type="evidence at protein level"/>